<comment type="function">
    <text evidence="1">Acts in the assembly and extrusion of the bacteriophage by forming a channel across the host outer membrane. This channel is just large enough to allow a newly synthesized phage particle to pass through. Extrusion is a process of concomitant assembly and secretion and takes place at specific assembly sites where host inner and outer membranes are in close contacts (By similarity).</text>
</comment>
<comment type="subunit">
    <text evidence="1">Homomultimer. The channel is composed of 14 G4P subunits that confer a barrel-like structure. Interacts with G1P; this interaction results in a complex that spans the inner an outer host membranes (By similarity).</text>
</comment>
<comment type="subcellular location">
    <subcellularLocation>
        <location evidence="3">Host membrane</location>
        <topology evidence="3">Single-pass type I membrane protein</topology>
    </subcellularLocation>
</comment>
<comment type="similarity">
    <text evidence="3">Belongs to the inovirus G4P protein family.</text>
</comment>
<accession>P03664</accession>
<evidence type="ECO:0000250" key="1"/>
<evidence type="ECO:0000255" key="2"/>
<evidence type="ECO:0000305" key="3"/>
<proteinExistence type="inferred from homology"/>
<organism>
    <name type="scientific">Enterobacteria phage fd</name>
    <name type="common">Bacteriophage fd</name>
    <dbReference type="NCBI Taxonomy" id="2847073"/>
    <lineage>
        <taxon>Viruses</taxon>
        <taxon>Monodnaviria</taxon>
        <taxon>Loebvirae</taxon>
        <taxon>Hofneiviricota</taxon>
        <taxon>Faserviricetes</taxon>
        <taxon>Tubulavirales</taxon>
        <taxon>Inoviridae</taxon>
        <taxon>Inovirus</taxon>
        <taxon>Enterobacteria phage M13</taxon>
    </lineage>
</organism>
<organismHost>
    <name type="scientific">Escherichia coli</name>
    <dbReference type="NCBI Taxonomy" id="562"/>
</organismHost>
<feature type="signal peptide" evidence="2">
    <location>
        <begin position="1"/>
        <end position="21"/>
    </location>
</feature>
<feature type="chain" id="PRO_0000209449" description="Virion export protein">
    <location>
        <begin position="22"/>
        <end position="426"/>
    </location>
</feature>
<feature type="transmembrane region" description="Helical" evidence="2">
    <location>
        <begin position="317"/>
        <end position="337"/>
    </location>
</feature>
<protein>
    <recommendedName>
        <fullName>Virion export protein</fullName>
    </recommendedName>
    <alternativeName>
        <fullName>Gene 4 protein</fullName>
        <shortName>G4P</shortName>
    </alternativeName>
</protein>
<sequence>MKLLNVINFVFLMFVSSSSFAQVIEMNNSPLRDFVTWYSKQTGESVIVSPDVKGTVTVYSSDVKPENLRNFFISVLRANNFDMVGSIPSIIQKYNPNSQDYIDELPSSDIQEYDDNSAPSGGFFVPQNDNVTQTFKINNVRAKDLIRVVELFVKSNTSKSSNVLSVDGSNLLVVSAPKDILDNLPQFLSTVDLPTDQILIEGLIFEVQQGDALDFSFAAGSQRGTVAGGVNTDRLTSVLSSAGGSFGIFNGDVLGLSVRALKTNSHSKILSVPRILTLSGQKGSISVGQNVPFITGRVTGESANVNNPFQTVERQNVGISMSVFPVAMAGGNIVLDITSKADSLSSSTQASDVITNQRSIATTVNLRDGQTLLLGGLTDYKNTSQDSGVPFLSKIPLIGLLFSSRSDSNEESTLYVLVKATIVRAL</sequence>
<dbReference type="EMBL" id="J02451">
    <property type="protein sequence ID" value="AAA32312.1"/>
    <property type="molecule type" value="Genomic_DNA"/>
</dbReference>
<dbReference type="PIR" id="A04268">
    <property type="entry name" value="Z4BPFD"/>
</dbReference>
<dbReference type="SMR" id="P03664"/>
<dbReference type="KEGG" id="vg:22475007"/>
<dbReference type="Proteomes" id="UP000001836">
    <property type="component" value="Genome"/>
</dbReference>
<dbReference type="GO" id="GO:0033644">
    <property type="term" value="C:host cell membrane"/>
    <property type="evidence" value="ECO:0007669"/>
    <property type="project" value="UniProtKB-SubCell"/>
</dbReference>
<dbReference type="GO" id="GO:0016020">
    <property type="term" value="C:membrane"/>
    <property type="evidence" value="ECO:0007669"/>
    <property type="project" value="UniProtKB-KW"/>
</dbReference>
<dbReference type="GO" id="GO:0009306">
    <property type="term" value="P:protein secretion"/>
    <property type="evidence" value="ECO:0007669"/>
    <property type="project" value="InterPro"/>
</dbReference>
<dbReference type="GO" id="GO:0099045">
    <property type="term" value="P:viral extrusion"/>
    <property type="evidence" value="ECO:0007669"/>
    <property type="project" value="UniProtKB-KW"/>
</dbReference>
<dbReference type="Gene3D" id="3.30.1370.120">
    <property type="match status" value="1"/>
</dbReference>
<dbReference type="Gene3D" id="3.55.50.30">
    <property type="match status" value="1"/>
</dbReference>
<dbReference type="InterPro" id="IPR050810">
    <property type="entry name" value="Bact_Secretion_Sys_Channel"/>
</dbReference>
<dbReference type="InterPro" id="IPR049371">
    <property type="entry name" value="GspD-like_N0"/>
</dbReference>
<dbReference type="InterPro" id="IPR001775">
    <property type="entry name" value="GspD/PilQ"/>
</dbReference>
<dbReference type="InterPro" id="IPR005644">
    <property type="entry name" value="NolW-like"/>
</dbReference>
<dbReference type="InterPro" id="IPR038591">
    <property type="entry name" value="NolW-like_sf"/>
</dbReference>
<dbReference type="InterPro" id="IPR004846">
    <property type="entry name" value="T2SS/T3SS_dom"/>
</dbReference>
<dbReference type="InterPro" id="IPR004845">
    <property type="entry name" value="T2SS_GspD_CS"/>
</dbReference>
<dbReference type="PANTHER" id="PTHR30332">
    <property type="entry name" value="PROBABLE GENERAL SECRETION PATHWAY PROTEIN D"/>
    <property type="match status" value="1"/>
</dbReference>
<dbReference type="PANTHER" id="PTHR30332:SF24">
    <property type="entry name" value="SECRETIN GSPD-RELATED"/>
    <property type="match status" value="1"/>
</dbReference>
<dbReference type="Pfam" id="PF00263">
    <property type="entry name" value="Secretin"/>
    <property type="match status" value="1"/>
</dbReference>
<dbReference type="Pfam" id="PF03958">
    <property type="entry name" value="Secretin_N"/>
    <property type="match status" value="1"/>
</dbReference>
<dbReference type="Pfam" id="PF21305">
    <property type="entry name" value="type_II_gspD_N0"/>
    <property type="match status" value="1"/>
</dbReference>
<dbReference type="PRINTS" id="PR00811">
    <property type="entry name" value="BCTERIALGSPD"/>
</dbReference>
<dbReference type="PRINTS" id="PR01032">
    <property type="entry name" value="PHAGEIV"/>
</dbReference>
<dbReference type="PROSITE" id="PS00875">
    <property type="entry name" value="T2SP_D"/>
    <property type="match status" value="1"/>
</dbReference>
<gene>
    <name type="primary">IV</name>
</gene>
<reference key="1">
    <citation type="journal article" date="1978" name="Nucleic Acids Res.">
        <title>Nucleotide sequence of bacteriophage fd DNA.</title>
        <authorList>
            <person name="Beck E."/>
            <person name="Sommer R."/>
            <person name="Auerswald E.A."/>
            <person name="Kurz C."/>
            <person name="Zink B."/>
            <person name="Osterburg G."/>
            <person name="Schaller H."/>
            <person name="Sugimoto K."/>
            <person name="Sugisaki H."/>
            <person name="Okamoto T."/>
            <person name="Takanami M."/>
        </authorList>
    </citation>
    <scope>NUCLEOTIDE SEQUENCE [GENOMIC DNA]</scope>
    <source>
        <strain>478 / Heidelberg</strain>
    </source>
</reference>
<keyword id="KW-1043">Host membrane</keyword>
<keyword id="KW-0472">Membrane</keyword>
<keyword id="KW-0732">Signal</keyword>
<keyword id="KW-0812">Transmembrane</keyword>
<keyword id="KW-1133">Transmembrane helix</keyword>
<keyword id="KW-1249">Viral extrusion</keyword>
<keyword id="KW-1188">Viral release from host cell</keyword>
<name>G4P_BPFD</name>